<sequence length="220" mass="24768">MHADFWQQRWRAGQIGFHQAQVNQDLQQYWPRLGLAPEARVLVPLCGKSQDMSWLIGQGCHVVGAELSETAVESYFSEHGVQPQITRQGDFSVYAAPGIEIWCGDFFALTSQDIGHCTAFYDRAALIALPADLRERYVQQLEALMPRECNGLLITLDYDQSRLEGPPFSVPPTWLQAFVSGNWNITKVGEHDALHSSPKALKAGVERLDEQVYVLARKLR</sequence>
<reference key="1">
    <citation type="journal article" date="2003" name="Proc. Natl. Acad. Sci. U.S.A.">
        <title>The complete genome sequence of the Arabidopsis and tomato pathogen Pseudomonas syringae pv. tomato DC3000.</title>
        <authorList>
            <person name="Buell C.R."/>
            <person name="Joardar V."/>
            <person name="Lindeberg M."/>
            <person name="Selengut J."/>
            <person name="Paulsen I.T."/>
            <person name="Gwinn M.L."/>
            <person name="Dodson R.J."/>
            <person name="DeBoy R.T."/>
            <person name="Durkin A.S."/>
            <person name="Kolonay J.F."/>
            <person name="Madupu R."/>
            <person name="Daugherty S.C."/>
            <person name="Brinkac L.M."/>
            <person name="Beanan M.J."/>
            <person name="Haft D.H."/>
            <person name="Nelson W.C."/>
            <person name="Davidsen T.M."/>
            <person name="Zafar N."/>
            <person name="Zhou L."/>
            <person name="Liu J."/>
            <person name="Yuan Q."/>
            <person name="Khouri H.M."/>
            <person name="Fedorova N.B."/>
            <person name="Tran B."/>
            <person name="Russell D."/>
            <person name="Berry K.J."/>
            <person name="Utterback T.R."/>
            <person name="Van Aken S.E."/>
            <person name="Feldblyum T.V."/>
            <person name="D'Ascenzo M."/>
            <person name="Deng W.-L."/>
            <person name="Ramos A.R."/>
            <person name="Alfano J.R."/>
            <person name="Cartinhour S."/>
            <person name="Chatterjee A.K."/>
            <person name="Delaney T.P."/>
            <person name="Lazarowitz S.G."/>
            <person name="Martin G.B."/>
            <person name="Schneider D.J."/>
            <person name="Tang X."/>
            <person name="Bender C.L."/>
            <person name="White O."/>
            <person name="Fraser C.M."/>
            <person name="Collmer A."/>
        </authorList>
    </citation>
    <scope>NUCLEOTIDE SEQUENCE [LARGE SCALE GENOMIC DNA]</scope>
    <source>
        <strain>ATCC BAA-871 / DC3000</strain>
    </source>
</reference>
<accession>Q885Q4</accession>
<dbReference type="EC" id="2.1.1.67" evidence="1"/>
<dbReference type="EMBL" id="AE016853">
    <property type="protein sequence ID" value="AAO55297.1"/>
    <property type="molecule type" value="Genomic_DNA"/>
</dbReference>
<dbReference type="RefSeq" id="NP_791602.1">
    <property type="nucleotide sequence ID" value="NC_004578.1"/>
</dbReference>
<dbReference type="RefSeq" id="WP_005766796.1">
    <property type="nucleotide sequence ID" value="NC_004578.1"/>
</dbReference>
<dbReference type="SMR" id="Q885Q4"/>
<dbReference type="STRING" id="223283.PSPTO_1777"/>
<dbReference type="DNASU" id="1183414"/>
<dbReference type="GeneID" id="1183414"/>
<dbReference type="KEGG" id="pst:PSPTO_1777"/>
<dbReference type="PATRIC" id="fig|223283.9.peg.1806"/>
<dbReference type="eggNOG" id="COG0500">
    <property type="taxonomic scope" value="Bacteria"/>
</dbReference>
<dbReference type="HOGENOM" id="CLU_085515_1_0_6"/>
<dbReference type="OrthoDB" id="9778208at2"/>
<dbReference type="PhylomeDB" id="Q885Q4"/>
<dbReference type="Proteomes" id="UP000002515">
    <property type="component" value="Chromosome"/>
</dbReference>
<dbReference type="GO" id="GO:0005737">
    <property type="term" value="C:cytoplasm"/>
    <property type="evidence" value="ECO:0007669"/>
    <property type="project" value="UniProtKB-SubCell"/>
</dbReference>
<dbReference type="GO" id="GO:0008119">
    <property type="term" value="F:thiopurine S-methyltransferase activity"/>
    <property type="evidence" value="ECO:0007669"/>
    <property type="project" value="UniProtKB-UniRule"/>
</dbReference>
<dbReference type="GO" id="GO:0032259">
    <property type="term" value="P:methylation"/>
    <property type="evidence" value="ECO:0007669"/>
    <property type="project" value="UniProtKB-KW"/>
</dbReference>
<dbReference type="GO" id="GO:0010038">
    <property type="term" value="P:response to metal ion"/>
    <property type="evidence" value="ECO:0007669"/>
    <property type="project" value="InterPro"/>
</dbReference>
<dbReference type="FunFam" id="3.40.50.150:FF:000101">
    <property type="entry name" value="Thiopurine S-methyltransferase"/>
    <property type="match status" value="1"/>
</dbReference>
<dbReference type="Gene3D" id="3.40.50.150">
    <property type="entry name" value="Vaccinia Virus protein VP39"/>
    <property type="match status" value="1"/>
</dbReference>
<dbReference type="HAMAP" id="MF_00812">
    <property type="entry name" value="Thiopur_methtran"/>
    <property type="match status" value="1"/>
</dbReference>
<dbReference type="InterPro" id="IPR029063">
    <property type="entry name" value="SAM-dependent_MTases_sf"/>
</dbReference>
<dbReference type="InterPro" id="IPR022474">
    <property type="entry name" value="Thiopur_S-MeTfrase_Se/Te_detox"/>
</dbReference>
<dbReference type="InterPro" id="IPR025835">
    <property type="entry name" value="Thiopurine_S-MeTrfase"/>
</dbReference>
<dbReference type="InterPro" id="IPR008854">
    <property type="entry name" value="TPMT"/>
</dbReference>
<dbReference type="NCBIfam" id="NF009732">
    <property type="entry name" value="PRK13255.1"/>
    <property type="match status" value="1"/>
</dbReference>
<dbReference type="NCBIfam" id="TIGR03840">
    <property type="entry name" value="TMPT_Se_Te"/>
    <property type="match status" value="1"/>
</dbReference>
<dbReference type="PANTHER" id="PTHR10259">
    <property type="entry name" value="THIOPURINE S-METHYLTRANSFERASE"/>
    <property type="match status" value="1"/>
</dbReference>
<dbReference type="PANTHER" id="PTHR10259:SF11">
    <property type="entry name" value="THIOPURINE S-METHYLTRANSFERASE"/>
    <property type="match status" value="1"/>
</dbReference>
<dbReference type="Pfam" id="PF05724">
    <property type="entry name" value="TPMT"/>
    <property type="match status" value="1"/>
</dbReference>
<dbReference type="PIRSF" id="PIRSF023956">
    <property type="entry name" value="Thiopurine_S-methyltransferase"/>
    <property type="match status" value="1"/>
</dbReference>
<dbReference type="SUPFAM" id="SSF53335">
    <property type="entry name" value="S-adenosyl-L-methionine-dependent methyltransferases"/>
    <property type="match status" value="1"/>
</dbReference>
<dbReference type="PROSITE" id="PS51585">
    <property type="entry name" value="SAM_MT_TPMT"/>
    <property type="match status" value="1"/>
</dbReference>
<proteinExistence type="inferred from homology"/>
<organism>
    <name type="scientific">Pseudomonas syringae pv. tomato (strain ATCC BAA-871 / DC3000)</name>
    <dbReference type="NCBI Taxonomy" id="223283"/>
    <lineage>
        <taxon>Bacteria</taxon>
        <taxon>Pseudomonadati</taxon>
        <taxon>Pseudomonadota</taxon>
        <taxon>Gammaproteobacteria</taxon>
        <taxon>Pseudomonadales</taxon>
        <taxon>Pseudomonadaceae</taxon>
        <taxon>Pseudomonas</taxon>
    </lineage>
</organism>
<name>TPMT_PSESM</name>
<protein>
    <recommendedName>
        <fullName evidence="1">Thiopurine S-methyltransferase</fullName>
        <ecNumber evidence="1">2.1.1.67</ecNumber>
    </recommendedName>
    <alternativeName>
        <fullName evidence="1">Thiopurine methyltransferase</fullName>
    </alternativeName>
</protein>
<evidence type="ECO:0000255" key="1">
    <source>
        <dbReference type="HAMAP-Rule" id="MF_00812"/>
    </source>
</evidence>
<comment type="catalytic activity">
    <reaction evidence="1">
        <text>S-adenosyl-L-methionine + a thiopurine = S-adenosyl-L-homocysteine + a thiopurine S-methylether.</text>
        <dbReference type="EC" id="2.1.1.67"/>
    </reaction>
</comment>
<comment type="subcellular location">
    <subcellularLocation>
        <location evidence="1">Cytoplasm</location>
    </subcellularLocation>
</comment>
<comment type="similarity">
    <text evidence="1">Belongs to the class I-like SAM-binding methyltransferase superfamily. TPMT family.</text>
</comment>
<keyword id="KW-0963">Cytoplasm</keyword>
<keyword id="KW-0489">Methyltransferase</keyword>
<keyword id="KW-1185">Reference proteome</keyword>
<keyword id="KW-0949">S-adenosyl-L-methionine</keyword>
<keyword id="KW-0808">Transferase</keyword>
<gene>
    <name evidence="1" type="primary">tpm</name>
    <name type="ordered locus">PSPTO_1777</name>
</gene>
<feature type="chain" id="PRO_0000220130" description="Thiopurine S-methyltransferase">
    <location>
        <begin position="1"/>
        <end position="220"/>
    </location>
</feature>
<feature type="binding site" evidence="1">
    <location>
        <position position="10"/>
    </location>
    <ligand>
        <name>S-adenosyl-L-methionine</name>
        <dbReference type="ChEBI" id="CHEBI:59789"/>
    </ligand>
</feature>
<feature type="binding site" evidence="1">
    <location>
        <position position="45"/>
    </location>
    <ligand>
        <name>S-adenosyl-L-methionine</name>
        <dbReference type="ChEBI" id="CHEBI:59789"/>
    </ligand>
</feature>
<feature type="binding site" evidence="1">
    <location>
        <position position="66"/>
    </location>
    <ligand>
        <name>S-adenosyl-L-methionine</name>
        <dbReference type="ChEBI" id="CHEBI:59789"/>
    </ligand>
</feature>
<feature type="binding site" evidence="1">
    <location>
        <position position="123"/>
    </location>
    <ligand>
        <name>S-adenosyl-L-methionine</name>
        <dbReference type="ChEBI" id="CHEBI:59789"/>
    </ligand>
</feature>